<sequence length="330" mass="37019">MTLIVTGAAGFIGANIVKALNERGETRIIAVDNLTRADKFKNLVDCEIDDYLDKTEFVERFARGDFGKVRAVFHEGACSDTMETDGRYMMDNNFRYSRAVLDACLAQGTQFLYASSAAIYGGSSRFVEAREFEAPLNVYGYSKFLFDQVIRRVMPSAKSQIAGFRYFNVYGPRESHKGRMASVAFHNFNQFRAEGKVKLFGEYNGYGPGEQTRDFVSVEDVAKVNLHFFDHPQKSGIFNLGTGRAQPFNDIATTVVNTLRALEGQPALTLAEQVEQGLVEYVPFPDALRGKYQCFTQADQTTLRAAGYDAPFLTVQEGVDRYVRWLFGQL</sequence>
<gene>
    <name evidence="1" type="primary">hldD</name>
    <name type="synonym">gmhD</name>
    <name type="ordered locus">BPSL2509</name>
</gene>
<dbReference type="EC" id="5.1.3.20" evidence="1"/>
<dbReference type="EMBL" id="BX571965">
    <property type="protein sequence ID" value="CAH36516.1"/>
    <property type="molecule type" value="Genomic_DNA"/>
</dbReference>
<dbReference type="RefSeq" id="YP_109105.1">
    <property type="nucleotide sequence ID" value="NC_006350.1"/>
</dbReference>
<dbReference type="SMR" id="P0DMK5"/>
<dbReference type="STRING" id="272560.BPSL2509"/>
<dbReference type="KEGG" id="bps:BPSL2509"/>
<dbReference type="PATRIC" id="fig|272560.51.peg.2872"/>
<dbReference type="eggNOG" id="COG0451">
    <property type="taxonomic scope" value="Bacteria"/>
</dbReference>
<dbReference type="UniPathway" id="UPA00356">
    <property type="reaction ID" value="UER00440"/>
</dbReference>
<dbReference type="Proteomes" id="UP000000605">
    <property type="component" value="Chromosome 1"/>
</dbReference>
<dbReference type="GO" id="GO:0008712">
    <property type="term" value="F:ADP-glyceromanno-heptose 6-epimerase activity"/>
    <property type="evidence" value="ECO:0007669"/>
    <property type="project" value="UniProtKB-UniRule"/>
</dbReference>
<dbReference type="GO" id="GO:0050661">
    <property type="term" value="F:NADP binding"/>
    <property type="evidence" value="ECO:0007669"/>
    <property type="project" value="InterPro"/>
</dbReference>
<dbReference type="GO" id="GO:0097171">
    <property type="term" value="P:ADP-L-glycero-beta-D-manno-heptose biosynthetic process"/>
    <property type="evidence" value="ECO:0007669"/>
    <property type="project" value="UniProtKB-UniPathway"/>
</dbReference>
<dbReference type="GO" id="GO:0005975">
    <property type="term" value="P:carbohydrate metabolic process"/>
    <property type="evidence" value="ECO:0007669"/>
    <property type="project" value="UniProtKB-UniRule"/>
</dbReference>
<dbReference type="CDD" id="cd05248">
    <property type="entry name" value="ADP_GME_SDR_e"/>
    <property type="match status" value="1"/>
</dbReference>
<dbReference type="Gene3D" id="3.40.50.720">
    <property type="entry name" value="NAD(P)-binding Rossmann-like Domain"/>
    <property type="match status" value="1"/>
</dbReference>
<dbReference type="Gene3D" id="3.90.25.10">
    <property type="entry name" value="UDP-galactose 4-epimerase, domain 1"/>
    <property type="match status" value="1"/>
</dbReference>
<dbReference type="HAMAP" id="MF_01601">
    <property type="entry name" value="Heptose_epimerase"/>
    <property type="match status" value="1"/>
</dbReference>
<dbReference type="InterPro" id="IPR001509">
    <property type="entry name" value="Epimerase_deHydtase"/>
</dbReference>
<dbReference type="InterPro" id="IPR011912">
    <property type="entry name" value="Heptose_epim"/>
</dbReference>
<dbReference type="InterPro" id="IPR036291">
    <property type="entry name" value="NAD(P)-bd_dom_sf"/>
</dbReference>
<dbReference type="NCBIfam" id="TIGR02197">
    <property type="entry name" value="heptose_epim"/>
    <property type="match status" value="1"/>
</dbReference>
<dbReference type="PANTHER" id="PTHR43103:SF3">
    <property type="entry name" value="ADP-L-GLYCERO-D-MANNO-HEPTOSE-6-EPIMERASE"/>
    <property type="match status" value="1"/>
</dbReference>
<dbReference type="PANTHER" id="PTHR43103">
    <property type="entry name" value="NUCLEOSIDE-DIPHOSPHATE-SUGAR EPIMERASE"/>
    <property type="match status" value="1"/>
</dbReference>
<dbReference type="Pfam" id="PF01370">
    <property type="entry name" value="Epimerase"/>
    <property type="match status" value="1"/>
</dbReference>
<dbReference type="SUPFAM" id="SSF51735">
    <property type="entry name" value="NAD(P)-binding Rossmann-fold domains"/>
    <property type="match status" value="1"/>
</dbReference>
<accession>P0DMK5</accession>
<accession>Q63S12</accession>
<accession>Q9WWX6</accession>
<proteinExistence type="inferred from homology"/>
<protein>
    <recommendedName>
        <fullName evidence="1">ADP-L-glycero-D-manno-heptose-6-epimerase</fullName>
        <ecNumber evidence="1">5.1.3.20</ecNumber>
    </recommendedName>
    <alternativeName>
        <fullName evidence="1">ADP-L-glycero-beta-D-manno-heptose-6-epimerase</fullName>
        <shortName evidence="1">ADP-glyceromanno-heptose 6-epimerase</shortName>
        <shortName evidence="1">ADP-hep 6-epimerase</shortName>
        <shortName evidence="1">AGME</shortName>
    </alternativeName>
</protein>
<name>HLDD_BURPS</name>
<evidence type="ECO:0000255" key="1">
    <source>
        <dbReference type="HAMAP-Rule" id="MF_01601"/>
    </source>
</evidence>
<comment type="function">
    <text evidence="1">Catalyzes the interconversion between ADP-D-glycero-beta-D-manno-heptose and ADP-L-glycero-beta-D-manno-heptose via an epimerization at carbon 6 of the heptose.</text>
</comment>
<comment type="catalytic activity">
    <reaction evidence="1">
        <text>ADP-D-glycero-beta-D-manno-heptose = ADP-L-glycero-beta-D-manno-heptose</text>
        <dbReference type="Rhea" id="RHEA:17577"/>
        <dbReference type="ChEBI" id="CHEBI:59967"/>
        <dbReference type="ChEBI" id="CHEBI:61506"/>
        <dbReference type="EC" id="5.1.3.20"/>
    </reaction>
</comment>
<comment type="cofactor">
    <cofactor evidence="1">
        <name>NADP(+)</name>
        <dbReference type="ChEBI" id="CHEBI:58349"/>
    </cofactor>
    <text evidence="1">Binds 1 NADP(+) per subunit.</text>
</comment>
<comment type="pathway">
    <text evidence="1">Nucleotide-sugar biosynthesis; ADP-L-glycero-beta-D-manno-heptose biosynthesis; ADP-L-glycero-beta-D-manno-heptose from D-glycero-beta-D-manno-heptose 7-phosphate: step 4/4.</text>
</comment>
<comment type="subunit">
    <text evidence="1">Homopentamer.</text>
</comment>
<comment type="domain">
    <text evidence="1">Contains a large N-terminal NADP-binding domain, and a smaller C-terminal substrate-binding domain.</text>
</comment>
<comment type="similarity">
    <text evidence="1">Belongs to the NAD(P)-dependent epimerase/dehydratase family. HldD subfamily.</text>
</comment>
<feature type="chain" id="PRO_0000205790" description="ADP-L-glycero-D-manno-heptose-6-epimerase">
    <location>
        <begin position="1"/>
        <end position="330"/>
    </location>
</feature>
<feature type="active site" description="Proton acceptor" evidence="1">
    <location>
        <position position="139"/>
    </location>
</feature>
<feature type="active site" description="Proton acceptor" evidence="1">
    <location>
        <position position="177"/>
    </location>
</feature>
<feature type="binding site" evidence="1">
    <location>
        <begin position="11"/>
        <end position="12"/>
    </location>
    <ligand>
        <name>NADP(+)</name>
        <dbReference type="ChEBI" id="CHEBI:58349"/>
    </ligand>
</feature>
<feature type="binding site" evidence="1">
    <location>
        <begin position="32"/>
        <end position="33"/>
    </location>
    <ligand>
        <name>NADP(+)</name>
        <dbReference type="ChEBI" id="CHEBI:58349"/>
    </ligand>
</feature>
<feature type="binding site" evidence="1">
    <location>
        <position position="39"/>
    </location>
    <ligand>
        <name>NADP(+)</name>
        <dbReference type="ChEBI" id="CHEBI:58349"/>
    </ligand>
</feature>
<feature type="binding site" evidence="1">
    <location>
        <position position="54"/>
    </location>
    <ligand>
        <name>NADP(+)</name>
        <dbReference type="ChEBI" id="CHEBI:58349"/>
    </ligand>
</feature>
<feature type="binding site" evidence="1">
    <location>
        <begin position="75"/>
        <end position="79"/>
    </location>
    <ligand>
        <name>NADP(+)</name>
        <dbReference type="ChEBI" id="CHEBI:58349"/>
    </ligand>
</feature>
<feature type="binding site" evidence="1">
    <location>
        <position position="92"/>
    </location>
    <ligand>
        <name>NADP(+)</name>
        <dbReference type="ChEBI" id="CHEBI:58349"/>
    </ligand>
</feature>
<feature type="binding site" evidence="1">
    <location>
        <position position="143"/>
    </location>
    <ligand>
        <name>NADP(+)</name>
        <dbReference type="ChEBI" id="CHEBI:58349"/>
    </ligand>
</feature>
<feature type="binding site" evidence="1">
    <location>
        <position position="168"/>
    </location>
    <ligand>
        <name>substrate</name>
    </ligand>
</feature>
<feature type="binding site" evidence="1">
    <location>
        <position position="169"/>
    </location>
    <ligand>
        <name>NADP(+)</name>
        <dbReference type="ChEBI" id="CHEBI:58349"/>
    </ligand>
</feature>
<feature type="binding site" evidence="1">
    <location>
        <position position="177"/>
    </location>
    <ligand>
        <name>NADP(+)</name>
        <dbReference type="ChEBI" id="CHEBI:58349"/>
    </ligand>
</feature>
<feature type="binding site" evidence="1">
    <location>
        <position position="179"/>
    </location>
    <ligand>
        <name>substrate</name>
    </ligand>
</feature>
<feature type="binding site" evidence="1">
    <location>
        <position position="186"/>
    </location>
    <ligand>
        <name>substrate</name>
    </ligand>
</feature>
<feature type="binding site" evidence="1">
    <location>
        <begin position="200"/>
        <end position="203"/>
    </location>
    <ligand>
        <name>substrate</name>
    </ligand>
</feature>
<feature type="binding site" evidence="1">
    <location>
        <position position="213"/>
    </location>
    <ligand>
        <name>substrate</name>
    </ligand>
</feature>
<feature type="binding site" evidence="1">
    <location>
        <position position="292"/>
    </location>
    <ligand>
        <name>substrate</name>
    </ligand>
</feature>
<keyword id="KW-0119">Carbohydrate metabolism</keyword>
<keyword id="KW-0413">Isomerase</keyword>
<keyword id="KW-0521">NADP</keyword>
<keyword id="KW-1185">Reference proteome</keyword>
<reference key="1">
    <citation type="journal article" date="2004" name="Proc. Natl. Acad. Sci. U.S.A.">
        <title>Genomic plasticity of the causative agent of melioidosis, Burkholderia pseudomallei.</title>
        <authorList>
            <person name="Holden M.T.G."/>
            <person name="Titball R.W."/>
            <person name="Peacock S.J."/>
            <person name="Cerdeno-Tarraga A.-M."/>
            <person name="Atkins T."/>
            <person name="Crossman L.C."/>
            <person name="Pitt T."/>
            <person name="Churcher C."/>
            <person name="Mungall K.L."/>
            <person name="Bentley S.D."/>
            <person name="Sebaihia M."/>
            <person name="Thomson N.R."/>
            <person name="Bason N."/>
            <person name="Beacham I.R."/>
            <person name="Brooks K."/>
            <person name="Brown K.A."/>
            <person name="Brown N.F."/>
            <person name="Challis G.L."/>
            <person name="Cherevach I."/>
            <person name="Chillingworth T."/>
            <person name="Cronin A."/>
            <person name="Crossett B."/>
            <person name="Davis P."/>
            <person name="DeShazer D."/>
            <person name="Feltwell T."/>
            <person name="Fraser A."/>
            <person name="Hance Z."/>
            <person name="Hauser H."/>
            <person name="Holroyd S."/>
            <person name="Jagels K."/>
            <person name="Keith K.E."/>
            <person name="Maddison M."/>
            <person name="Moule S."/>
            <person name="Price C."/>
            <person name="Quail M.A."/>
            <person name="Rabbinowitsch E."/>
            <person name="Rutherford K."/>
            <person name="Sanders M."/>
            <person name="Simmonds M."/>
            <person name="Songsivilai S."/>
            <person name="Stevens K."/>
            <person name="Tumapa S."/>
            <person name="Vesaratchavest M."/>
            <person name="Whitehead S."/>
            <person name="Yeats C."/>
            <person name="Barrell B.G."/>
            <person name="Oyston P.C.F."/>
            <person name="Parkhill J."/>
        </authorList>
    </citation>
    <scope>NUCLEOTIDE SEQUENCE [LARGE SCALE GENOMIC DNA]</scope>
    <source>
        <strain>K96243</strain>
    </source>
</reference>
<organism>
    <name type="scientific">Burkholderia pseudomallei (strain K96243)</name>
    <dbReference type="NCBI Taxonomy" id="272560"/>
    <lineage>
        <taxon>Bacteria</taxon>
        <taxon>Pseudomonadati</taxon>
        <taxon>Pseudomonadota</taxon>
        <taxon>Betaproteobacteria</taxon>
        <taxon>Burkholderiales</taxon>
        <taxon>Burkholderiaceae</taxon>
        <taxon>Burkholderia</taxon>
        <taxon>pseudomallei group</taxon>
    </lineage>
</organism>